<keyword id="KW-0963">Cytoplasm</keyword>
<keyword id="KW-0489">Methyltransferase</keyword>
<keyword id="KW-0698">rRNA processing</keyword>
<keyword id="KW-0949">S-adenosyl-L-methionine</keyword>
<keyword id="KW-0808">Transferase</keyword>
<feature type="chain" id="PRO_0000349901" description="Ribosomal RNA large subunit methyltransferase F">
    <location>
        <begin position="1"/>
        <end position="340"/>
    </location>
</feature>
<name>RLMF_DECAR</name>
<comment type="function">
    <text evidence="1">Specifically methylates the adenine in position 1618 of 23S rRNA.</text>
</comment>
<comment type="catalytic activity">
    <reaction evidence="1">
        <text>adenosine(1618) in 23S rRNA + S-adenosyl-L-methionine = N(6)-methyladenosine(1618) in 23S rRNA + S-adenosyl-L-homocysteine + H(+)</text>
        <dbReference type="Rhea" id="RHEA:16497"/>
        <dbReference type="Rhea" id="RHEA-COMP:10229"/>
        <dbReference type="Rhea" id="RHEA-COMP:10231"/>
        <dbReference type="ChEBI" id="CHEBI:15378"/>
        <dbReference type="ChEBI" id="CHEBI:57856"/>
        <dbReference type="ChEBI" id="CHEBI:59789"/>
        <dbReference type="ChEBI" id="CHEBI:74411"/>
        <dbReference type="ChEBI" id="CHEBI:74449"/>
        <dbReference type="EC" id="2.1.1.181"/>
    </reaction>
</comment>
<comment type="subcellular location">
    <subcellularLocation>
        <location evidence="1">Cytoplasm</location>
    </subcellularLocation>
</comment>
<comment type="similarity">
    <text evidence="1">Belongs to the methyltransferase superfamily. METTL16/RlmF family.</text>
</comment>
<protein>
    <recommendedName>
        <fullName evidence="1">Ribosomal RNA large subunit methyltransferase F</fullName>
        <ecNumber evidence="1">2.1.1.181</ecNumber>
    </recommendedName>
    <alternativeName>
        <fullName evidence="1">23S rRNA mA1618 methyltransferase</fullName>
    </alternativeName>
    <alternativeName>
        <fullName evidence="1">rRNA adenine N-6-methyltransferase</fullName>
    </alternativeName>
</protein>
<organism>
    <name type="scientific">Dechloromonas aromatica (strain RCB)</name>
    <dbReference type="NCBI Taxonomy" id="159087"/>
    <lineage>
        <taxon>Bacteria</taxon>
        <taxon>Pseudomonadati</taxon>
        <taxon>Pseudomonadota</taxon>
        <taxon>Betaproteobacteria</taxon>
        <taxon>Rhodocyclales</taxon>
        <taxon>Azonexaceae</taxon>
        <taxon>Dechloromonas</taxon>
    </lineage>
</organism>
<evidence type="ECO:0000255" key="1">
    <source>
        <dbReference type="HAMAP-Rule" id="MF_01848"/>
    </source>
</evidence>
<sequence length="340" mass="36947">MHPRNKNAEGYDFAALAATSAALAKHIKTTQAGTASIDFANPAAVKMLNRAILMHHYGVKGWDIPAGYLCPPIPGRADYIHSVADLLATCNKKNIPSGPGVRVLDIGVGANMVYPLIGHAEYGWSFLGVDIDEAALANAQSIIGKNPELASDIELRHQPVWDNIFTGLLRSGEVFDLSICNPPFHNSPDDVHAVSQRKWNNLNKPGAKRGAAEPRLNFGGGGSELWCNGGERAFVKRMIEQSCNIPKRVMWFTSLLSQGDNLPHIEAALKKAKVVESRIIPMAQGQKQSRLVAWTFCGNGEREKWRRERWTAAPSYAVPAFAEQTAPLTAEATPPAADPV</sequence>
<proteinExistence type="inferred from homology"/>
<accession>Q47C26</accession>
<gene>
    <name evidence="1" type="primary">rlmF</name>
    <name type="ordered locus">Daro_2875</name>
</gene>
<dbReference type="EC" id="2.1.1.181" evidence="1"/>
<dbReference type="EMBL" id="CP000089">
    <property type="protein sequence ID" value="AAZ47605.1"/>
    <property type="molecule type" value="Genomic_DNA"/>
</dbReference>
<dbReference type="SMR" id="Q47C26"/>
<dbReference type="STRING" id="159087.Daro_2875"/>
<dbReference type="KEGG" id="dar:Daro_2875"/>
<dbReference type="eggNOG" id="COG3129">
    <property type="taxonomic scope" value="Bacteria"/>
</dbReference>
<dbReference type="HOGENOM" id="CLU_027534_3_0_4"/>
<dbReference type="OrthoDB" id="1115728at2"/>
<dbReference type="GO" id="GO:0005737">
    <property type="term" value="C:cytoplasm"/>
    <property type="evidence" value="ECO:0007669"/>
    <property type="project" value="UniProtKB-SubCell"/>
</dbReference>
<dbReference type="GO" id="GO:0052907">
    <property type="term" value="F:23S rRNA (adenine(1618)-N(6))-methyltransferase activity"/>
    <property type="evidence" value="ECO:0007669"/>
    <property type="project" value="UniProtKB-EC"/>
</dbReference>
<dbReference type="GO" id="GO:0070475">
    <property type="term" value="P:rRNA base methylation"/>
    <property type="evidence" value="ECO:0007669"/>
    <property type="project" value="TreeGrafter"/>
</dbReference>
<dbReference type="CDD" id="cd02440">
    <property type="entry name" value="AdoMet_MTases"/>
    <property type="match status" value="1"/>
</dbReference>
<dbReference type="Gene3D" id="3.40.50.150">
    <property type="entry name" value="Vaccinia Virus protein VP39"/>
    <property type="match status" value="1"/>
</dbReference>
<dbReference type="HAMAP" id="MF_01848">
    <property type="entry name" value="23SrRNA_methyltr_F"/>
    <property type="match status" value="1"/>
</dbReference>
<dbReference type="InterPro" id="IPR010286">
    <property type="entry name" value="METTL16/RlmF"/>
</dbReference>
<dbReference type="InterPro" id="IPR016909">
    <property type="entry name" value="rRNA_lsu_MeTfrase_F"/>
</dbReference>
<dbReference type="InterPro" id="IPR029063">
    <property type="entry name" value="SAM-dependent_MTases_sf"/>
</dbReference>
<dbReference type="NCBIfam" id="NF008725">
    <property type="entry name" value="PRK11727.1"/>
    <property type="match status" value="1"/>
</dbReference>
<dbReference type="PANTHER" id="PTHR13393:SF0">
    <property type="entry name" value="RNA N6-ADENOSINE-METHYLTRANSFERASE METTL16"/>
    <property type="match status" value="1"/>
</dbReference>
<dbReference type="PANTHER" id="PTHR13393">
    <property type="entry name" value="SAM-DEPENDENT METHYLTRANSFERASE"/>
    <property type="match status" value="1"/>
</dbReference>
<dbReference type="Pfam" id="PF05971">
    <property type="entry name" value="Methyltransf_10"/>
    <property type="match status" value="1"/>
</dbReference>
<dbReference type="PIRSF" id="PIRSF029038">
    <property type="entry name" value="Mtase_YbiN_prd"/>
    <property type="match status" value="1"/>
</dbReference>
<dbReference type="SUPFAM" id="SSF53335">
    <property type="entry name" value="S-adenosyl-L-methionine-dependent methyltransferases"/>
    <property type="match status" value="1"/>
</dbReference>
<reference key="1">
    <citation type="journal article" date="2009" name="BMC Genomics">
        <title>Metabolic analysis of the soil microbe Dechloromonas aromatica str. RCB: indications of a surprisingly complex life-style and cryptic anaerobic pathways for aromatic degradation.</title>
        <authorList>
            <person name="Salinero K.K."/>
            <person name="Keller K."/>
            <person name="Feil W.S."/>
            <person name="Feil H."/>
            <person name="Trong S."/>
            <person name="Di Bartolo G."/>
            <person name="Lapidus A."/>
        </authorList>
    </citation>
    <scope>NUCLEOTIDE SEQUENCE [LARGE SCALE GENOMIC DNA]</scope>
    <source>
        <strain>RCB</strain>
    </source>
</reference>